<feature type="chain" id="PRO_0000109618" description="Protein translocase subunit SecA">
    <location>
        <begin position="1"/>
        <end position="932"/>
    </location>
</feature>
<feature type="binding site" evidence="1">
    <location>
        <position position="90"/>
    </location>
    <ligand>
        <name>ATP</name>
        <dbReference type="ChEBI" id="CHEBI:30616"/>
    </ligand>
</feature>
<feature type="binding site" evidence="1">
    <location>
        <begin position="108"/>
        <end position="112"/>
    </location>
    <ligand>
        <name>ATP</name>
        <dbReference type="ChEBI" id="CHEBI:30616"/>
    </ligand>
</feature>
<feature type="binding site" evidence="1">
    <location>
        <position position="498"/>
    </location>
    <ligand>
        <name>ATP</name>
        <dbReference type="ChEBI" id="CHEBI:30616"/>
    </ligand>
</feature>
<sequence>MLKALFGDPNTRKLKKFQPYVAEVNLYEEDIEKLSDDELKYKTVEFREALDKARSDAETEEILDEILPEAFAVVREAGKRVLGMRHFDVQLLGGIILHKGQIAEMKTGEGKTLVATLPSYLNGLTGKGVHVVTVNDYLARRDAEWMGQIHRFLGLTVGLVQSGMNPEERKKNYACDITYTTNSELGFDYLRDNMSTAMIEVVQRPFNFCIIDEVDSILIDEARTPLIISGQVERPTEKYLQASDIAAQLEPEIHYEVDEKQRNVLMTDEGFEKAEQLLQTTDLFDKNDPWAHYIFNAIKAKELFLKDVNYIVRNGEVVIVDEFTGRIMVGRRWSDGLHQAIEAKERVEIQKESQTLATITYQNFFLLYPKLSGMTGTAKTEETELEKVYNLQVTITPTNRPSSRQDWPDVVYKNEEAKWKAVALECEELHQQGRPILVGTTSVEKSEVISRLLQSSGIHHNLLNARPENVERESEIVAQAGRKGAVTIATNMAGRGTDIILGGNSDYMARLKVREYLMPKIVRPEDDELGAGVTGWVSGREKPQGFGNQNGKKKVKTWQVSPDIYPTTISQETEDLLKKAVKFAVDQYGLQSLTELEAEDKLAIASEKGPTDDPVILKLREVYNQIRREYEVLTSAEHKEVVELGGLHVIGTERHESRRVDNQLRGRAGRQGDPGSTRFFLSLEDNLLRIFGGDRVAGLMNMFRVEEDMPIESKMLTGSLEGAQKKVETYYYDIRKQVFEYDEVMNNQRKAIYAERRRVLEGLDLKEQVLVYAEKTMDEIVDAYVNPELPPEEWDVENMLDKAKQFVYLLEDLTVEDLGDMTVWEMKTFFHEEVRKAYDLKETQVDKVRPGLMREAERYFILQQIDNLWREHLQSMEALRESIGLRGYGQKDPLIEYKQEGYEMFLEMMIDIRRNVVYSLFQFQPQQQPQAV</sequence>
<name>SECA_SYNY3</name>
<protein>
    <recommendedName>
        <fullName evidence="1">Protein translocase subunit SecA</fullName>
        <ecNumber evidence="1">7.4.2.8</ecNumber>
    </recommendedName>
</protein>
<accession>Q55709</accession>
<accession>Q55065</accession>
<gene>
    <name evidence="1" type="primary">secA</name>
    <name type="ordered locus">sll0616</name>
</gene>
<comment type="function">
    <text evidence="1">Part of the Sec protein translocase complex. Interacts with the SecYEG preprotein conducting channel. Has a central role in coupling the hydrolysis of ATP to the transfer of proteins into and across the cell membrane, serving as an ATP-driven molecular motor driving the stepwise translocation of polypeptide chains across the membrane.</text>
</comment>
<comment type="function">
    <text evidence="1">Probably participates in protein translocation into and across both the cytoplasmic and thylakoid membranes in cyanobacterial cells.</text>
</comment>
<comment type="catalytic activity">
    <reaction evidence="1">
        <text>ATP + H2O + cellular proteinSide 1 = ADP + phosphate + cellular proteinSide 2.</text>
        <dbReference type="EC" id="7.4.2.8"/>
    </reaction>
</comment>
<comment type="subunit">
    <text evidence="1">Monomer and homodimer. Part of the essential Sec protein translocation apparatus which comprises SecA, SecYEG and auxiliary proteins SecDF. Other proteins may also be involved.</text>
</comment>
<comment type="subcellular location">
    <subcellularLocation>
        <location evidence="1">Cell inner membrane</location>
        <topology evidence="1">Peripheral membrane protein</topology>
        <orientation evidence="1">Cytoplasmic side</orientation>
    </subcellularLocation>
    <subcellularLocation>
        <location evidence="1">Cellular thylakoid membrane</location>
        <topology evidence="1">Peripheral membrane protein</topology>
        <orientation evidence="1">Cytoplasmic side</orientation>
    </subcellularLocation>
    <subcellularLocation>
        <location evidence="1">Cytoplasm</location>
    </subcellularLocation>
</comment>
<comment type="similarity">
    <text evidence="1">Belongs to the SecA family.</text>
</comment>
<reference key="1">
    <citation type="journal article" date="1995" name="DNA Res.">
        <title>Sequence analysis of the genome of the unicellular cyanobacterium Synechocystis sp. strain PCC6803. I. Sequence features in the 1 Mb region from map positions 64% to 92% of the genome.</title>
        <authorList>
            <person name="Kaneko T."/>
            <person name="Tanaka A."/>
            <person name="Sato S."/>
            <person name="Kotani H."/>
            <person name="Sazuka T."/>
            <person name="Miyajima N."/>
            <person name="Sugiura M."/>
            <person name="Tabata S."/>
        </authorList>
    </citation>
    <scope>NUCLEOTIDE SEQUENCE [LARGE SCALE GENOMIC DNA]</scope>
    <source>
        <strain>ATCC 27184 / PCC 6803 / N-1</strain>
    </source>
</reference>
<reference key="2">
    <citation type="journal article" date="1996" name="DNA Res.">
        <title>Sequence analysis of the genome of the unicellular cyanobacterium Synechocystis sp. strain PCC6803. II. Sequence determination of the entire genome and assignment of potential protein-coding regions.</title>
        <authorList>
            <person name="Kaneko T."/>
            <person name="Sato S."/>
            <person name="Kotani H."/>
            <person name="Tanaka A."/>
            <person name="Asamizu E."/>
            <person name="Nakamura Y."/>
            <person name="Miyajima N."/>
            <person name="Hirosawa M."/>
            <person name="Sugiura M."/>
            <person name="Sasamoto S."/>
            <person name="Kimura T."/>
            <person name="Hosouchi T."/>
            <person name="Matsuno A."/>
            <person name="Muraki A."/>
            <person name="Nakazaki N."/>
            <person name="Naruo K."/>
            <person name="Okumura S."/>
            <person name="Shimpo S."/>
            <person name="Takeuchi C."/>
            <person name="Wada T."/>
            <person name="Watanabe A."/>
            <person name="Yamada M."/>
            <person name="Yasuda M."/>
            <person name="Tabata S."/>
        </authorList>
    </citation>
    <scope>NUCLEOTIDE SEQUENCE [LARGE SCALE GENOMIC DNA]</scope>
    <source>
        <strain>ATCC 27184 / PCC 6803 / Kazusa</strain>
    </source>
</reference>
<reference key="3">
    <citation type="journal article" date="1998" name="Mol. Microbiol.">
        <title>Promoter element spacing controls basal expression and light inducibility of the cyanobacterial secA gene.</title>
        <authorList>
            <person name="Mazouni K."/>
            <person name="Bulteau S."/>
            <person name="Cassier-Chauvat C."/>
            <person name="Chauvat F."/>
        </authorList>
    </citation>
    <scope>NUCLEOTIDE SEQUENCE [GENOMIC DNA] OF 1-777</scope>
</reference>
<evidence type="ECO:0000255" key="1">
    <source>
        <dbReference type="HAMAP-Rule" id="MF_01382"/>
    </source>
</evidence>
<dbReference type="EC" id="7.4.2.8" evidence="1"/>
<dbReference type="EMBL" id="BA000022">
    <property type="protein sequence ID" value="BAA10347.1"/>
    <property type="molecule type" value="Genomic_DNA"/>
</dbReference>
<dbReference type="EMBL" id="U38892">
    <property type="protein sequence ID" value="AAA96399.1"/>
    <property type="molecule type" value="Genomic_DNA"/>
</dbReference>
<dbReference type="PIR" id="S76501">
    <property type="entry name" value="S76501"/>
</dbReference>
<dbReference type="SMR" id="Q55709"/>
<dbReference type="FunCoup" id="Q55709">
    <property type="interactions" value="471"/>
</dbReference>
<dbReference type="IntAct" id="Q55709">
    <property type="interactions" value="9"/>
</dbReference>
<dbReference type="STRING" id="1148.gene:10499848"/>
<dbReference type="PaxDb" id="1148-1001616"/>
<dbReference type="EnsemblBacteria" id="BAA10347">
    <property type="protein sequence ID" value="BAA10347"/>
    <property type="gene ID" value="BAA10347"/>
</dbReference>
<dbReference type="KEGG" id="syn:sll0616"/>
<dbReference type="eggNOG" id="COG0653">
    <property type="taxonomic scope" value="Bacteria"/>
</dbReference>
<dbReference type="InParanoid" id="Q55709"/>
<dbReference type="PhylomeDB" id="Q55709"/>
<dbReference type="Proteomes" id="UP000001425">
    <property type="component" value="Chromosome"/>
</dbReference>
<dbReference type="GO" id="GO:0031522">
    <property type="term" value="C:cell envelope Sec protein transport complex"/>
    <property type="evidence" value="ECO:0000318"/>
    <property type="project" value="GO_Central"/>
</dbReference>
<dbReference type="GO" id="GO:0005886">
    <property type="term" value="C:plasma membrane"/>
    <property type="evidence" value="ECO:0000318"/>
    <property type="project" value="GO_Central"/>
</dbReference>
<dbReference type="GO" id="GO:0031676">
    <property type="term" value="C:plasma membrane-derived thylakoid membrane"/>
    <property type="evidence" value="ECO:0007669"/>
    <property type="project" value="UniProtKB-SubCell"/>
</dbReference>
<dbReference type="GO" id="GO:0005524">
    <property type="term" value="F:ATP binding"/>
    <property type="evidence" value="ECO:0000318"/>
    <property type="project" value="GO_Central"/>
</dbReference>
<dbReference type="GO" id="GO:0008564">
    <property type="term" value="F:protein-exporting ATPase activity"/>
    <property type="evidence" value="ECO:0007669"/>
    <property type="project" value="UniProtKB-EC"/>
</dbReference>
<dbReference type="GO" id="GO:0065002">
    <property type="term" value="P:intracellular protein transmembrane transport"/>
    <property type="evidence" value="ECO:0007669"/>
    <property type="project" value="UniProtKB-UniRule"/>
</dbReference>
<dbReference type="GO" id="GO:0017038">
    <property type="term" value="P:protein import"/>
    <property type="evidence" value="ECO:0007669"/>
    <property type="project" value="InterPro"/>
</dbReference>
<dbReference type="GO" id="GO:0006605">
    <property type="term" value="P:protein targeting"/>
    <property type="evidence" value="ECO:0007669"/>
    <property type="project" value="UniProtKB-UniRule"/>
</dbReference>
<dbReference type="GO" id="GO:0043952">
    <property type="term" value="P:protein transport by the Sec complex"/>
    <property type="evidence" value="ECO:0000318"/>
    <property type="project" value="GO_Central"/>
</dbReference>
<dbReference type="CDD" id="cd17928">
    <property type="entry name" value="DEXDc_SecA"/>
    <property type="match status" value="1"/>
</dbReference>
<dbReference type="CDD" id="cd18803">
    <property type="entry name" value="SF2_C_secA"/>
    <property type="match status" value="1"/>
</dbReference>
<dbReference type="FunFam" id="3.90.1440.10:FF:000003">
    <property type="entry name" value="Preprotein translocase SecA subunit"/>
    <property type="match status" value="1"/>
</dbReference>
<dbReference type="FunFam" id="3.40.50.300:FF:000429">
    <property type="entry name" value="Preprotein translocase subunit SecA"/>
    <property type="match status" value="1"/>
</dbReference>
<dbReference type="FunFam" id="1.10.3060.10:FF:000003">
    <property type="entry name" value="Protein translocase subunit SecA"/>
    <property type="match status" value="1"/>
</dbReference>
<dbReference type="FunFam" id="3.40.50.300:FF:000334">
    <property type="entry name" value="Protein translocase subunit SecA"/>
    <property type="match status" value="1"/>
</dbReference>
<dbReference type="Gene3D" id="1.10.3060.10">
    <property type="entry name" value="Helical scaffold and wing domains of SecA"/>
    <property type="match status" value="1"/>
</dbReference>
<dbReference type="Gene3D" id="3.40.50.300">
    <property type="entry name" value="P-loop containing nucleotide triphosphate hydrolases"/>
    <property type="match status" value="2"/>
</dbReference>
<dbReference type="Gene3D" id="3.90.1440.10">
    <property type="entry name" value="SecA, preprotein cross-linking domain"/>
    <property type="match status" value="1"/>
</dbReference>
<dbReference type="HAMAP" id="MF_01382">
    <property type="entry name" value="SecA"/>
    <property type="match status" value="1"/>
</dbReference>
<dbReference type="InterPro" id="IPR014001">
    <property type="entry name" value="Helicase_ATP-bd"/>
</dbReference>
<dbReference type="InterPro" id="IPR027417">
    <property type="entry name" value="P-loop_NTPase"/>
</dbReference>
<dbReference type="InterPro" id="IPR000185">
    <property type="entry name" value="SecA"/>
</dbReference>
<dbReference type="InterPro" id="IPR020937">
    <property type="entry name" value="SecA_CS"/>
</dbReference>
<dbReference type="InterPro" id="IPR011115">
    <property type="entry name" value="SecA_DEAD"/>
</dbReference>
<dbReference type="InterPro" id="IPR014018">
    <property type="entry name" value="SecA_motor_DEAD"/>
</dbReference>
<dbReference type="InterPro" id="IPR011130">
    <property type="entry name" value="SecA_preprotein_X-link_dom"/>
</dbReference>
<dbReference type="InterPro" id="IPR044722">
    <property type="entry name" value="SecA_SF2_C"/>
</dbReference>
<dbReference type="InterPro" id="IPR011116">
    <property type="entry name" value="SecA_Wing/Scaffold"/>
</dbReference>
<dbReference type="InterPro" id="IPR036266">
    <property type="entry name" value="SecA_Wing/Scaffold_sf"/>
</dbReference>
<dbReference type="InterPro" id="IPR036670">
    <property type="entry name" value="SecA_X-link_sf"/>
</dbReference>
<dbReference type="NCBIfam" id="TIGR00963">
    <property type="entry name" value="secA"/>
    <property type="match status" value="1"/>
</dbReference>
<dbReference type="PANTHER" id="PTHR30612:SF0">
    <property type="entry name" value="CHLOROPLAST PROTEIN-TRANSPORTING ATPASE"/>
    <property type="match status" value="1"/>
</dbReference>
<dbReference type="PANTHER" id="PTHR30612">
    <property type="entry name" value="SECA INNER MEMBRANE COMPONENT OF SEC PROTEIN SECRETION SYSTEM"/>
    <property type="match status" value="1"/>
</dbReference>
<dbReference type="Pfam" id="PF21090">
    <property type="entry name" value="P-loop_SecA"/>
    <property type="match status" value="1"/>
</dbReference>
<dbReference type="Pfam" id="PF07517">
    <property type="entry name" value="SecA_DEAD"/>
    <property type="match status" value="1"/>
</dbReference>
<dbReference type="Pfam" id="PF01043">
    <property type="entry name" value="SecA_PP_bind"/>
    <property type="match status" value="1"/>
</dbReference>
<dbReference type="Pfam" id="PF07516">
    <property type="entry name" value="SecA_SW"/>
    <property type="match status" value="1"/>
</dbReference>
<dbReference type="PRINTS" id="PR00906">
    <property type="entry name" value="SECA"/>
</dbReference>
<dbReference type="SMART" id="SM00957">
    <property type="entry name" value="SecA_DEAD"/>
    <property type="match status" value="1"/>
</dbReference>
<dbReference type="SMART" id="SM00958">
    <property type="entry name" value="SecA_PP_bind"/>
    <property type="match status" value="1"/>
</dbReference>
<dbReference type="SUPFAM" id="SSF81886">
    <property type="entry name" value="Helical scaffold and wing domains of SecA"/>
    <property type="match status" value="1"/>
</dbReference>
<dbReference type="SUPFAM" id="SSF52540">
    <property type="entry name" value="P-loop containing nucleoside triphosphate hydrolases"/>
    <property type="match status" value="2"/>
</dbReference>
<dbReference type="SUPFAM" id="SSF81767">
    <property type="entry name" value="Pre-protein crosslinking domain of SecA"/>
    <property type="match status" value="1"/>
</dbReference>
<dbReference type="PROSITE" id="PS01312">
    <property type="entry name" value="SECA"/>
    <property type="match status" value="1"/>
</dbReference>
<dbReference type="PROSITE" id="PS51196">
    <property type="entry name" value="SECA_MOTOR_DEAD"/>
    <property type="match status" value="1"/>
</dbReference>
<keyword id="KW-0067">ATP-binding</keyword>
<keyword id="KW-0997">Cell inner membrane</keyword>
<keyword id="KW-1003">Cell membrane</keyword>
<keyword id="KW-0963">Cytoplasm</keyword>
<keyword id="KW-0472">Membrane</keyword>
<keyword id="KW-0547">Nucleotide-binding</keyword>
<keyword id="KW-0653">Protein transport</keyword>
<keyword id="KW-1185">Reference proteome</keyword>
<keyword id="KW-0793">Thylakoid</keyword>
<keyword id="KW-1278">Translocase</keyword>
<keyword id="KW-0811">Translocation</keyword>
<keyword id="KW-0813">Transport</keyword>
<proteinExistence type="inferred from homology"/>
<organism>
    <name type="scientific">Synechocystis sp. (strain ATCC 27184 / PCC 6803 / Kazusa)</name>
    <dbReference type="NCBI Taxonomy" id="1111708"/>
    <lineage>
        <taxon>Bacteria</taxon>
        <taxon>Bacillati</taxon>
        <taxon>Cyanobacteriota</taxon>
        <taxon>Cyanophyceae</taxon>
        <taxon>Synechococcales</taxon>
        <taxon>Merismopediaceae</taxon>
        <taxon>Synechocystis</taxon>
    </lineage>
</organism>